<organism>
    <name type="scientific">Pseudomonas aeruginosa (strain ATCC 15692 / DSM 22644 / CIP 104116 / JCM 14847 / LMG 12228 / 1C / PRS 101 / PAO1)</name>
    <dbReference type="NCBI Taxonomy" id="208964"/>
    <lineage>
        <taxon>Bacteria</taxon>
        <taxon>Pseudomonadati</taxon>
        <taxon>Pseudomonadota</taxon>
        <taxon>Gammaproteobacteria</taxon>
        <taxon>Pseudomonadales</taxon>
        <taxon>Pseudomonadaceae</taxon>
        <taxon>Pseudomonas</taxon>
    </lineage>
</organism>
<proteinExistence type="evidence at protein level"/>
<dbReference type="EC" id="2.7.7.6"/>
<dbReference type="EMBL" id="AE004091">
    <property type="protein sequence ID" value="AAG08722.1"/>
    <property type="molecule type" value="Genomic_DNA"/>
</dbReference>
<dbReference type="PIR" id="G82978">
    <property type="entry name" value="G82978"/>
</dbReference>
<dbReference type="RefSeq" id="NP_254024.1">
    <property type="nucleotide sequence ID" value="NC_002516.2"/>
</dbReference>
<dbReference type="RefSeq" id="WP_003096602.1">
    <property type="nucleotide sequence ID" value="NZ_QZGE01000020.1"/>
</dbReference>
<dbReference type="PDB" id="7F0R">
    <property type="method" value="EM"/>
    <property type="resolution" value="5.80 A"/>
    <property type="chains" value="E=1-88"/>
</dbReference>
<dbReference type="PDB" id="7VF9">
    <property type="method" value="EM"/>
    <property type="resolution" value="4.04 A"/>
    <property type="chains" value="E=1-88"/>
</dbReference>
<dbReference type="PDB" id="7XL3">
    <property type="method" value="EM"/>
    <property type="resolution" value="3.13 A"/>
    <property type="chains" value="E=1-88"/>
</dbReference>
<dbReference type="PDB" id="7XL4">
    <property type="method" value="EM"/>
    <property type="resolution" value="3.86 A"/>
    <property type="chains" value="E=1-88"/>
</dbReference>
<dbReference type="PDB" id="7XYA">
    <property type="method" value="EM"/>
    <property type="resolution" value="3.30 A"/>
    <property type="chains" value="E=1-88"/>
</dbReference>
<dbReference type="PDB" id="7XYB">
    <property type="method" value="EM"/>
    <property type="resolution" value="3.70 A"/>
    <property type="chains" value="E=1-88"/>
</dbReference>
<dbReference type="PDBsum" id="7F0R"/>
<dbReference type="PDBsum" id="7VF9"/>
<dbReference type="PDBsum" id="7XL3"/>
<dbReference type="PDBsum" id="7XL4"/>
<dbReference type="PDBsum" id="7XYA"/>
<dbReference type="PDBsum" id="7XYB"/>
<dbReference type="EMDB" id="EMD-31403"/>
<dbReference type="EMDB" id="EMD-31948"/>
<dbReference type="EMDB" id="EMD-33271"/>
<dbReference type="EMDB" id="EMD-33272"/>
<dbReference type="EMDB" id="EMD-33515"/>
<dbReference type="EMDB" id="EMD-33516"/>
<dbReference type="SMR" id="Q9HTM1"/>
<dbReference type="FunCoup" id="Q9HTM1">
    <property type="interactions" value="234"/>
</dbReference>
<dbReference type="STRING" id="208964.PA5337"/>
<dbReference type="PaxDb" id="208964-PA5337"/>
<dbReference type="DNASU" id="878048"/>
<dbReference type="GeneID" id="77223868"/>
<dbReference type="GeneID" id="878048"/>
<dbReference type="KEGG" id="pae:PA5337"/>
<dbReference type="PATRIC" id="fig|208964.12.peg.5592"/>
<dbReference type="PseudoCAP" id="PA5337"/>
<dbReference type="HOGENOM" id="CLU_125406_5_3_6"/>
<dbReference type="InParanoid" id="Q9HTM1"/>
<dbReference type="OrthoDB" id="9796300at2"/>
<dbReference type="PhylomeDB" id="Q9HTM1"/>
<dbReference type="BioCyc" id="PAER208964:G1FZ6-5459-MONOMER"/>
<dbReference type="Proteomes" id="UP000002438">
    <property type="component" value="Chromosome"/>
</dbReference>
<dbReference type="GO" id="GO:0000345">
    <property type="term" value="C:cytosolic DNA-directed RNA polymerase complex"/>
    <property type="evidence" value="ECO:0000318"/>
    <property type="project" value="GO_Central"/>
</dbReference>
<dbReference type="GO" id="GO:0001000">
    <property type="term" value="F:bacterial-type RNA polymerase core enzyme binding"/>
    <property type="evidence" value="ECO:0000318"/>
    <property type="project" value="GO_Central"/>
</dbReference>
<dbReference type="GO" id="GO:0003677">
    <property type="term" value="F:DNA binding"/>
    <property type="evidence" value="ECO:0007669"/>
    <property type="project" value="UniProtKB-UniRule"/>
</dbReference>
<dbReference type="GO" id="GO:0003899">
    <property type="term" value="F:DNA-directed RNA polymerase activity"/>
    <property type="evidence" value="ECO:0007669"/>
    <property type="project" value="UniProtKB-UniRule"/>
</dbReference>
<dbReference type="GO" id="GO:0006352">
    <property type="term" value="P:DNA-templated transcription initiation"/>
    <property type="evidence" value="ECO:0000318"/>
    <property type="project" value="GO_Central"/>
</dbReference>
<dbReference type="Gene3D" id="3.90.940.10">
    <property type="match status" value="1"/>
</dbReference>
<dbReference type="HAMAP" id="MF_00366">
    <property type="entry name" value="RNApol_bact_RpoZ"/>
    <property type="match status" value="1"/>
</dbReference>
<dbReference type="InterPro" id="IPR003716">
    <property type="entry name" value="DNA-dir_RNA_pol_omega"/>
</dbReference>
<dbReference type="InterPro" id="IPR006110">
    <property type="entry name" value="Pol_omega/Rpo6/RPB6"/>
</dbReference>
<dbReference type="InterPro" id="IPR036161">
    <property type="entry name" value="RPB6/omega-like_sf"/>
</dbReference>
<dbReference type="NCBIfam" id="TIGR00690">
    <property type="entry name" value="rpoZ"/>
    <property type="match status" value="1"/>
</dbReference>
<dbReference type="PANTHER" id="PTHR34476">
    <property type="entry name" value="DNA-DIRECTED RNA POLYMERASE SUBUNIT OMEGA"/>
    <property type="match status" value="1"/>
</dbReference>
<dbReference type="PANTHER" id="PTHR34476:SF1">
    <property type="entry name" value="DNA-DIRECTED RNA POLYMERASE SUBUNIT OMEGA"/>
    <property type="match status" value="1"/>
</dbReference>
<dbReference type="Pfam" id="PF01192">
    <property type="entry name" value="RNA_pol_Rpb6"/>
    <property type="match status" value="1"/>
</dbReference>
<dbReference type="SMART" id="SM01409">
    <property type="entry name" value="RNA_pol_Rpb6"/>
    <property type="match status" value="1"/>
</dbReference>
<dbReference type="SUPFAM" id="SSF63562">
    <property type="entry name" value="RPB6/omega subunit-like"/>
    <property type="match status" value="1"/>
</dbReference>
<comment type="function">
    <text evidence="1">Promotes RNA polymerase assembly. Latches the N- and C-terminal regions of the beta' subunit thereby facilitating its interaction with the beta and alpha subunits (By similarity).</text>
</comment>
<comment type="catalytic activity">
    <reaction>
        <text>RNA(n) + a ribonucleoside 5'-triphosphate = RNA(n+1) + diphosphate</text>
        <dbReference type="Rhea" id="RHEA:21248"/>
        <dbReference type="Rhea" id="RHEA-COMP:14527"/>
        <dbReference type="Rhea" id="RHEA-COMP:17342"/>
        <dbReference type="ChEBI" id="CHEBI:33019"/>
        <dbReference type="ChEBI" id="CHEBI:61557"/>
        <dbReference type="ChEBI" id="CHEBI:140395"/>
        <dbReference type="EC" id="2.7.7.6"/>
    </reaction>
</comment>
<comment type="subunit">
    <text evidence="1">The RNAP catalytic core consists of 2 alpha, 1 beta, 1 beta' and 1 omega subunit. When a sigma factor is associated with the core the holoenzyme is formed, which can initiate transcription (By similarity).</text>
</comment>
<comment type="similarity">
    <text evidence="2">Belongs to the RNA polymerase subunit omega family.</text>
</comment>
<evidence type="ECO:0000250" key="1"/>
<evidence type="ECO:0000305" key="2"/>
<evidence type="ECO:0007829" key="3">
    <source>
        <dbReference type="PDB" id="7XL3"/>
    </source>
</evidence>
<keyword id="KW-0002">3D-structure</keyword>
<keyword id="KW-0240">DNA-directed RNA polymerase</keyword>
<keyword id="KW-0548">Nucleotidyltransferase</keyword>
<keyword id="KW-1185">Reference proteome</keyword>
<keyword id="KW-0804">Transcription</keyword>
<keyword id="KW-0808">Transferase</keyword>
<reference key="1">
    <citation type="journal article" date="2000" name="Nature">
        <title>Complete genome sequence of Pseudomonas aeruginosa PAO1, an opportunistic pathogen.</title>
        <authorList>
            <person name="Stover C.K."/>
            <person name="Pham X.-Q.T."/>
            <person name="Erwin A.L."/>
            <person name="Mizoguchi S.D."/>
            <person name="Warrener P."/>
            <person name="Hickey M.J."/>
            <person name="Brinkman F.S.L."/>
            <person name="Hufnagle W.O."/>
            <person name="Kowalik D.J."/>
            <person name="Lagrou M."/>
            <person name="Garber R.L."/>
            <person name="Goltry L."/>
            <person name="Tolentino E."/>
            <person name="Westbrock-Wadman S."/>
            <person name="Yuan Y."/>
            <person name="Brody L.L."/>
            <person name="Coulter S.N."/>
            <person name="Folger K.R."/>
            <person name="Kas A."/>
            <person name="Larbig K."/>
            <person name="Lim R.M."/>
            <person name="Smith K.A."/>
            <person name="Spencer D.H."/>
            <person name="Wong G.K.-S."/>
            <person name="Wu Z."/>
            <person name="Paulsen I.T."/>
            <person name="Reizer J."/>
            <person name="Saier M.H. Jr."/>
            <person name="Hancock R.E.W."/>
            <person name="Lory S."/>
            <person name="Olson M.V."/>
        </authorList>
    </citation>
    <scope>NUCLEOTIDE SEQUENCE [LARGE SCALE GENOMIC DNA]</scope>
    <source>
        <strain>ATCC 15692 / DSM 22644 / CIP 104116 / JCM 14847 / LMG 12228 / 1C / PRS 101 / PAO1</strain>
    </source>
</reference>
<protein>
    <recommendedName>
        <fullName>DNA-directed RNA polymerase subunit omega</fullName>
        <shortName>RNAP omega subunit</shortName>
        <ecNumber>2.7.7.6</ecNumber>
    </recommendedName>
    <alternativeName>
        <fullName>RNA polymerase omega subunit</fullName>
    </alternativeName>
    <alternativeName>
        <fullName>Transcriptase subunit omega</fullName>
    </alternativeName>
</protein>
<accession>Q9HTM1</accession>
<feature type="chain" id="PRO_0000128963" description="DNA-directed RNA polymerase subunit omega">
    <location>
        <begin position="1"/>
        <end position="88"/>
    </location>
</feature>
<feature type="helix" evidence="3">
    <location>
        <begin position="6"/>
        <end position="13"/>
    </location>
</feature>
<feature type="helix" evidence="3">
    <location>
        <begin position="18"/>
        <end position="31"/>
    </location>
</feature>
<feature type="helix" evidence="3">
    <location>
        <begin position="46"/>
        <end position="55"/>
    </location>
</feature>
<feature type="helix" evidence="3">
    <location>
        <begin position="61"/>
        <end position="71"/>
    </location>
</feature>
<gene>
    <name type="primary">rpoZ</name>
    <name type="ordered locus">PA5337</name>
</gene>
<name>RPOZ_PSEAE</name>
<sequence length="88" mass="9775">MARVTVEDCLDNVDNRFELVMLATKRARQLATGGKEPKVAWENDKPTVVALREIASGLVDENVVQQEDIVEDEPLFAAFDDEANTEAL</sequence>